<geneLocation type="chloroplast"/>
<protein>
    <recommendedName>
        <fullName evidence="1">Cytochrome b6-f complex subunit 5</fullName>
    </recommendedName>
    <alternativeName>
        <fullName evidence="1">Cytochrome b6-f complex subunit PetG</fullName>
    </alternativeName>
    <alternativeName>
        <fullName evidence="1">Cytochrome b6-f complex subunit V</fullName>
    </alternativeName>
</protein>
<feature type="chain" id="PRO_0000275496" description="Cytochrome b6-f complex subunit 5">
    <location>
        <begin position="1"/>
        <end position="37"/>
    </location>
</feature>
<feature type="transmembrane region" description="Helical" evidence="1">
    <location>
        <begin position="5"/>
        <end position="25"/>
    </location>
</feature>
<comment type="function">
    <text evidence="1">Component of the cytochrome b6-f complex, which mediates electron transfer between photosystem II (PSII) and photosystem I (PSI), cyclic electron flow around PSI, and state transitions. PetG is required for either the stability or assembly of the cytochrome b6-f complex.</text>
</comment>
<comment type="subunit">
    <text evidence="1">The 4 large subunits of the cytochrome b6-f complex are cytochrome b6, subunit IV (17 kDa polypeptide, PetD), cytochrome f and the Rieske protein, while the 4 small subunits are PetG, PetL, PetM and PetN. The complex functions as a dimer.</text>
</comment>
<comment type="subcellular location">
    <subcellularLocation>
        <location evidence="1">Plastid</location>
        <location evidence="1">Chloroplast thylakoid membrane</location>
        <topology evidence="1">Single-pass membrane protein</topology>
    </subcellularLocation>
</comment>
<comment type="similarity">
    <text evidence="1">Belongs to the PetG family.</text>
</comment>
<keyword id="KW-0150">Chloroplast</keyword>
<keyword id="KW-0249">Electron transport</keyword>
<keyword id="KW-0472">Membrane</keyword>
<keyword id="KW-0602">Photosynthesis</keyword>
<keyword id="KW-0934">Plastid</keyword>
<keyword id="KW-0793">Thylakoid</keyword>
<keyword id="KW-0812">Transmembrane</keyword>
<keyword id="KW-1133">Transmembrane helix</keyword>
<keyword id="KW-0813">Transport</keyword>
<name>PETG_MORIN</name>
<gene>
    <name evidence="1" type="primary">petG</name>
    <name type="ordered locus">MoinCp040</name>
</gene>
<evidence type="ECO:0000255" key="1">
    <source>
        <dbReference type="HAMAP-Rule" id="MF_00432"/>
    </source>
</evidence>
<accession>Q09WZ8</accession>
<proteinExistence type="inferred from homology"/>
<sequence length="37" mass="4170">MIEVFLFGIVLGLIPITLAGLFVTAYLQYRRGDQLDL</sequence>
<reference key="1">
    <citation type="submission" date="2005-09" db="EMBL/GenBank/DDBJ databases">
        <title>The chloroplast genome of mulberry: structural features and comparative analysis.</title>
        <authorList>
            <person name="Ravi V."/>
            <person name="Khurana J.P."/>
            <person name="Tyagi A.K."/>
            <person name="Khurana P."/>
        </authorList>
    </citation>
    <scope>NUCLEOTIDE SEQUENCE [LARGE SCALE GENOMIC DNA]</scope>
    <source>
        <strain>cv. K2</strain>
    </source>
</reference>
<dbReference type="EMBL" id="DQ226511">
    <property type="protein sequence ID" value="ABB20975.1"/>
    <property type="molecule type" value="Genomic_DNA"/>
</dbReference>
<dbReference type="RefSeq" id="YP_762280.1">
    <property type="nucleotide sequence ID" value="NC_008359.1"/>
</dbReference>
<dbReference type="SMR" id="Q09WZ8"/>
<dbReference type="GeneID" id="4290554"/>
<dbReference type="GO" id="GO:0009535">
    <property type="term" value="C:chloroplast thylakoid membrane"/>
    <property type="evidence" value="ECO:0007669"/>
    <property type="project" value="UniProtKB-SubCell"/>
</dbReference>
<dbReference type="GO" id="GO:0009512">
    <property type="term" value="C:cytochrome b6f complex"/>
    <property type="evidence" value="ECO:0007669"/>
    <property type="project" value="InterPro"/>
</dbReference>
<dbReference type="GO" id="GO:0045158">
    <property type="term" value="F:electron transporter, transferring electrons within cytochrome b6/f complex of photosystem II activity"/>
    <property type="evidence" value="ECO:0007669"/>
    <property type="project" value="UniProtKB-UniRule"/>
</dbReference>
<dbReference type="GO" id="GO:0017004">
    <property type="term" value="P:cytochrome complex assembly"/>
    <property type="evidence" value="ECO:0007669"/>
    <property type="project" value="UniProtKB-UniRule"/>
</dbReference>
<dbReference type="GO" id="GO:0015979">
    <property type="term" value="P:photosynthesis"/>
    <property type="evidence" value="ECO:0007669"/>
    <property type="project" value="UniProtKB-KW"/>
</dbReference>
<dbReference type="HAMAP" id="MF_00432">
    <property type="entry name" value="Cytb6_f_PetG"/>
    <property type="match status" value="1"/>
</dbReference>
<dbReference type="InterPro" id="IPR003683">
    <property type="entry name" value="Cyt_6/f_cplx_su5"/>
</dbReference>
<dbReference type="InterPro" id="IPR036099">
    <property type="entry name" value="Cyt_6/f_cplx_su5_sf"/>
</dbReference>
<dbReference type="NCBIfam" id="NF001907">
    <property type="entry name" value="PRK00665.1"/>
    <property type="match status" value="1"/>
</dbReference>
<dbReference type="Pfam" id="PF02529">
    <property type="entry name" value="PetG"/>
    <property type="match status" value="1"/>
</dbReference>
<dbReference type="PIRSF" id="PIRSF000034">
    <property type="entry name" value="Cyt_b6-f_V"/>
    <property type="match status" value="1"/>
</dbReference>
<dbReference type="SUPFAM" id="SSF103446">
    <property type="entry name" value="PetG subunit of the cytochrome b6f complex"/>
    <property type="match status" value="1"/>
</dbReference>
<organism>
    <name type="scientific">Morus indica</name>
    <name type="common">Mulberry</name>
    <dbReference type="NCBI Taxonomy" id="248361"/>
    <lineage>
        <taxon>Eukaryota</taxon>
        <taxon>Viridiplantae</taxon>
        <taxon>Streptophyta</taxon>
        <taxon>Embryophyta</taxon>
        <taxon>Tracheophyta</taxon>
        <taxon>Spermatophyta</taxon>
        <taxon>Magnoliopsida</taxon>
        <taxon>eudicotyledons</taxon>
        <taxon>Gunneridae</taxon>
        <taxon>Pentapetalae</taxon>
        <taxon>rosids</taxon>
        <taxon>fabids</taxon>
        <taxon>Rosales</taxon>
        <taxon>Moraceae</taxon>
        <taxon>Moreae</taxon>
        <taxon>Morus</taxon>
    </lineage>
</organism>